<organism>
    <name type="scientific">Rattus norvegicus</name>
    <name type="common">Rat</name>
    <dbReference type="NCBI Taxonomy" id="10116"/>
    <lineage>
        <taxon>Eukaryota</taxon>
        <taxon>Metazoa</taxon>
        <taxon>Chordata</taxon>
        <taxon>Craniata</taxon>
        <taxon>Vertebrata</taxon>
        <taxon>Euteleostomi</taxon>
        <taxon>Mammalia</taxon>
        <taxon>Eutheria</taxon>
        <taxon>Euarchontoglires</taxon>
        <taxon>Glires</taxon>
        <taxon>Rodentia</taxon>
        <taxon>Myomorpha</taxon>
        <taxon>Muroidea</taxon>
        <taxon>Muridae</taxon>
        <taxon>Murinae</taxon>
        <taxon>Rattus</taxon>
    </lineage>
</organism>
<evidence type="ECO:0000250" key="1"/>
<evidence type="ECO:0000250" key="2">
    <source>
        <dbReference type="UniProtKB" id="P24452"/>
    </source>
</evidence>
<evidence type="ECO:0000250" key="3">
    <source>
        <dbReference type="UniProtKB" id="P40121"/>
    </source>
</evidence>
<evidence type="ECO:0000255" key="4"/>
<evidence type="ECO:0000305" key="5"/>
<evidence type="ECO:0007744" key="6">
    <source>
    </source>
</evidence>
<evidence type="ECO:0007744" key="7">
    <source>
    </source>
</evidence>
<protein>
    <recommendedName>
        <fullName>Macrophage-capping protein</fullName>
    </recommendedName>
    <alternativeName>
        <fullName>Actin regulatory protein CAP-G</fullName>
    </alternativeName>
</protein>
<comment type="function">
    <text evidence="1">Calcium-sensitive protein which reversibly blocks the barbed ends of actin filaments but does not sever preformed actin filaments. May play an important role in macrophage function. May play a role in regulating cytoplasmic and/or nuclear structures through potential interactions with actin. May bind DNA. Uncapping occurs either when Ca(2+) falls or when the concentration of polyphosphoinositide rises, both at low and high Ca(2+) (By similarity).</text>
</comment>
<comment type="subunit">
    <text evidence="3">Interacts with NUP62. Interacts with NUTF2 and RAN; involved in CAPG nuclear import.</text>
</comment>
<comment type="subcellular location">
    <subcellularLocation>
        <location evidence="2">Nucleus</location>
    </subcellularLocation>
    <subcellularLocation>
        <location evidence="2">Cytoplasm</location>
    </subcellularLocation>
    <subcellularLocation>
        <location evidence="3">Melanosome</location>
    </subcellularLocation>
    <subcellularLocation>
        <location evidence="2">Cell projection</location>
        <location evidence="2">Lamellipodium</location>
    </subcellularLocation>
    <subcellularLocation>
        <location evidence="2">Cell projection</location>
        <location evidence="2">Ruffle</location>
    </subcellularLocation>
    <text evidence="2">In macrophages, may be predominantly cytoplasmic. Nuclear localization was observed in fibroblasts. In macrophages, present at the membrane-cytoplasm interface. In activated macrophages, concentrated in the ruffles of the leading lamellipodia.</text>
</comment>
<comment type="PTM">
    <text evidence="1">Phosphorylated.</text>
</comment>
<comment type="similarity">
    <text evidence="5">Belongs to the villin/gelsolin family.</text>
</comment>
<name>CAPG_RAT</name>
<dbReference type="EMBL" id="BC079104">
    <property type="protein sequence ID" value="AAH79104.1"/>
    <property type="molecule type" value="mRNA"/>
</dbReference>
<dbReference type="RefSeq" id="NP_001013104.1">
    <property type="nucleotide sequence ID" value="NM_001013086.1"/>
</dbReference>
<dbReference type="RefSeq" id="XP_006236723.1">
    <property type="nucleotide sequence ID" value="XM_006236661.5"/>
</dbReference>
<dbReference type="RefSeq" id="XP_006236724.1">
    <property type="nucleotide sequence ID" value="XM_006236662.3"/>
</dbReference>
<dbReference type="RefSeq" id="XP_006236725.1">
    <property type="nucleotide sequence ID" value="XM_006236663.5"/>
</dbReference>
<dbReference type="RefSeq" id="XP_017448026.1">
    <property type="nucleotide sequence ID" value="XM_017592537.1"/>
</dbReference>
<dbReference type="RefSeq" id="XP_017448027.1">
    <property type="nucleotide sequence ID" value="XM_017592538.1"/>
</dbReference>
<dbReference type="RefSeq" id="XP_017448028.1">
    <property type="nucleotide sequence ID" value="XM_017592539.1"/>
</dbReference>
<dbReference type="RefSeq" id="XP_017448029.1">
    <property type="nucleotide sequence ID" value="XM_017592540.1"/>
</dbReference>
<dbReference type="RefSeq" id="XP_017448030.1">
    <property type="nucleotide sequence ID" value="XM_017592541.1"/>
</dbReference>
<dbReference type="RefSeq" id="XP_038963249.1">
    <property type="nucleotide sequence ID" value="XM_039107321.2"/>
</dbReference>
<dbReference type="SMR" id="Q6AYC4"/>
<dbReference type="FunCoup" id="Q6AYC4">
    <property type="interactions" value="369"/>
</dbReference>
<dbReference type="STRING" id="10116.ENSRNOP00000018562"/>
<dbReference type="iPTMnet" id="Q6AYC4"/>
<dbReference type="PhosphoSitePlus" id="Q6AYC4"/>
<dbReference type="PaxDb" id="10116-ENSRNOP00000018562"/>
<dbReference type="Ensembl" id="ENSRNOT00000102328.1">
    <property type="protein sequence ID" value="ENSRNOP00000096107.1"/>
    <property type="gene ID" value="ENSRNOG00000013668.5"/>
</dbReference>
<dbReference type="GeneID" id="297339"/>
<dbReference type="KEGG" id="rno:297339"/>
<dbReference type="UCSC" id="RGD:1311724">
    <property type="organism name" value="rat"/>
</dbReference>
<dbReference type="AGR" id="RGD:1311724"/>
<dbReference type="CTD" id="822"/>
<dbReference type="RGD" id="1311724">
    <property type="gene designation" value="Capg"/>
</dbReference>
<dbReference type="eggNOG" id="KOG0443">
    <property type="taxonomic scope" value="Eukaryota"/>
</dbReference>
<dbReference type="GeneTree" id="ENSGT00940000159305"/>
<dbReference type="HOGENOM" id="CLU_002568_0_0_1"/>
<dbReference type="InParanoid" id="Q6AYC4"/>
<dbReference type="OrthoDB" id="5367at9989"/>
<dbReference type="PhylomeDB" id="Q6AYC4"/>
<dbReference type="TreeFam" id="TF313468"/>
<dbReference type="PRO" id="PR:Q6AYC4"/>
<dbReference type="Proteomes" id="UP000002494">
    <property type="component" value="Chromosome 4"/>
</dbReference>
<dbReference type="Bgee" id="ENSRNOG00000013668">
    <property type="expression patterns" value="Expressed in esophagus and 19 other cell types or tissues"/>
</dbReference>
<dbReference type="GO" id="GO:0015629">
    <property type="term" value="C:actin cytoskeleton"/>
    <property type="evidence" value="ECO:0000318"/>
    <property type="project" value="GO_Central"/>
</dbReference>
<dbReference type="GO" id="GO:0005814">
    <property type="term" value="C:centriole"/>
    <property type="evidence" value="ECO:0000266"/>
    <property type="project" value="RGD"/>
</dbReference>
<dbReference type="GO" id="GO:0005737">
    <property type="term" value="C:cytoplasm"/>
    <property type="evidence" value="ECO:0000266"/>
    <property type="project" value="RGD"/>
</dbReference>
<dbReference type="GO" id="GO:0090543">
    <property type="term" value="C:Flemming body"/>
    <property type="evidence" value="ECO:0000266"/>
    <property type="project" value="RGD"/>
</dbReference>
<dbReference type="GO" id="GO:0030027">
    <property type="term" value="C:lamellipodium"/>
    <property type="evidence" value="ECO:0007669"/>
    <property type="project" value="UniProtKB-SubCell"/>
</dbReference>
<dbReference type="GO" id="GO:0042470">
    <property type="term" value="C:melanosome"/>
    <property type="evidence" value="ECO:0007669"/>
    <property type="project" value="UniProtKB-SubCell"/>
</dbReference>
<dbReference type="GO" id="GO:0072686">
    <property type="term" value="C:mitotic spindle"/>
    <property type="evidence" value="ECO:0000266"/>
    <property type="project" value="RGD"/>
</dbReference>
<dbReference type="GO" id="GO:0005730">
    <property type="term" value="C:nucleolus"/>
    <property type="evidence" value="ECO:0000266"/>
    <property type="project" value="RGD"/>
</dbReference>
<dbReference type="GO" id="GO:0005654">
    <property type="term" value="C:nucleoplasm"/>
    <property type="evidence" value="ECO:0000266"/>
    <property type="project" value="RGD"/>
</dbReference>
<dbReference type="GO" id="GO:0005634">
    <property type="term" value="C:nucleus"/>
    <property type="evidence" value="ECO:0000266"/>
    <property type="project" value="RGD"/>
</dbReference>
<dbReference type="GO" id="GO:0045335">
    <property type="term" value="C:phagocytic vesicle"/>
    <property type="evidence" value="ECO:0000266"/>
    <property type="project" value="RGD"/>
</dbReference>
<dbReference type="GO" id="GO:0001726">
    <property type="term" value="C:ruffle"/>
    <property type="evidence" value="ECO:0007669"/>
    <property type="project" value="UniProtKB-SubCell"/>
</dbReference>
<dbReference type="GO" id="GO:0051015">
    <property type="term" value="F:actin filament binding"/>
    <property type="evidence" value="ECO:0000318"/>
    <property type="project" value="GO_Central"/>
</dbReference>
<dbReference type="GO" id="GO:0005546">
    <property type="term" value="F:phosphatidylinositol-4,5-bisphosphate binding"/>
    <property type="evidence" value="ECO:0000318"/>
    <property type="project" value="GO_Central"/>
</dbReference>
<dbReference type="GO" id="GO:0019904">
    <property type="term" value="F:protein domain specific binding"/>
    <property type="evidence" value="ECO:0000266"/>
    <property type="project" value="RGD"/>
</dbReference>
<dbReference type="GO" id="GO:0044877">
    <property type="term" value="F:protein-containing complex binding"/>
    <property type="evidence" value="ECO:0000266"/>
    <property type="project" value="RGD"/>
</dbReference>
<dbReference type="GO" id="GO:0051014">
    <property type="term" value="P:actin filament severing"/>
    <property type="evidence" value="ECO:0000318"/>
    <property type="project" value="GO_Central"/>
</dbReference>
<dbReference type="GO" id="GO:0008154">
    <property type="term" value="P:actin polymerization or depolymerization"/>
    <property type="evidence" value="ECO:0000318"/>
    <property type="project" value="GO_Central"/>
</dbReference>
<dbReference type="GO" id="GO:0051016">
    <property type="term" value="P:barbed-end actin filament capping"/>
    <property type="evidence" value="ECO:0000318"/>
    <property type="project" value="GO_Central"/>
</dbReference>
<dbReference type="GO" id="GO:0030031">
    <property type="term" value="P:cell projection assembly"/>
    <property type="evidence" value="ECO:0000266"/>
    <property type="project" value="RGD"/>
</dbReference>
<dbReference type="GO" id="GO:0071346">
    <property type="term" value="P:cellular response to type II interferon"/>
    <property type="evidence" value="ECO:0000266"/>
    <property type="project" value="RGD"/>
</dbReference>
<dbReference type="GO" id="GO:0007417">
    <property type="term" value="P:central nervous system development"/>
    <property type="evidence" value="ECO:0000318"/>
    <property type="project" value="GO_Central"/>
</dbReference>
<dbReference type="CDD" id="cd11290">
    <property type="entry name" value="gelsolin_S1_like"/>
    <property type="match status" value="1"/>
</dbReference>
<dbReference type="CDD" id="cd11289">
    <property type="entry name" value="gelsolin_S2_like"/>
    <property type="match status" value="1"/>
</dbReference>
<dbReference type="CDD" id="cd11292">
    <property type="entry name" value="gelsolin_S3_like"/>
    <property type="match status" value="1"/>
</dbReference>
<dbReference type="FunFam" id="3.40.20.10:FF:000040">
    <property type="entry name" value="macrophage-capping protein-like isoform X1"/>
    <property type="match status" value="1"/>
</dbReference>
<dbReference type="FunFam" id="3.40.20.10:FF:000037">
    <property type="entry name" value="macrophage-capping protein-like isoform X2"/>
    <property type="match status" value="1"/>
</dbReference>
<dbReference type="FunFam" id="3.40.20.10:FF:000043">
    <property type="entry name" value="macrophage-capping protein-like isoform X2"/>
    <property type="match status" value="1"/>
</dbReference>
<dbReference type="Gene3D" id="3.40.20.10">
    <property type="entry name" value="Severin"/>
    <property type="match status" value="3"/>
</dbReference>
<dbReference type="InterPro" id="IPR029006">
    <property type="entry name" value="ADF-H/Gelsolin-like_dom_sf"/>
</dbReference>
<dbReference type="InterPro" id="IPR007123">
    <property type="entry name" value="Gelsolin-like_dom"/>
</dbReference>
<dbReference type="InterPro" id="IPR007122">
    <property type="entry name" value="Villin/Gelsolin"/>
</dbReference>
<dbReference type="PANTHER" id="PTHR11977:SF127">
    <property type="entry name" value="MACROPHAGE-CAPPING PROTEIN"/>
    <property type="match status" value="1"/>
</dbReference>
<dbReference type="PANTHER" id="PTHR11977">
    <property type="entry name" value="VILLIN"/>
    <property type="match status" value="1"/>
</dbReference>
<dbReference type="Pfam" id="PF00626">
    <property type="entry name" value="Gelsolin"/>
    <property type="match status" value="3"/>
</dbReference>
<dbReference type="PRINTS" id="PR00597">
    <property type="entry name" value="GELSOLIN"/>
</dbReference>
<dbReference type="SMART" id="SM00262">
    <property type="entry name" value="GEL"/>
    <property type="match status" value="3"/>
</dbReference>
<dbReference type="SUPFAM" id="SSF55753">
    <property type="entry name" value="Actin depolymerizing proteins"/>
    <property type="match status" value="3"/>
</dbReference>
<keyword id="KW-0007">Acetylation</keyword>
<keyword id="KW-0117">Actin capping</keyword>
<keyword id="KW-0009">Actin-binding</keyword>
<keyword id="KW-0966">Cell projection</keyword>
<keyword id="KW-0963">Cytoplasm</keyword>
<keyword id="KW-0903">Direct protein sequencing</keyword>
<keyword id="KW-0539">Nucleus</keyword>
<keyword id="KW-0597">Phosphoprotein</keyword>
<keyword id="KW-1185">Reference proteome</keyword>
<keyword id="KW-0677">Repeat</keyword>
<reference key="1">
    <citation type="journal article" date="2004" name="Genome Res.">
        <title>The status, quality, and expansion of the NIH full-length cDNA project: the Mammalian Gene Collection (MGC).</title>
        <authorList>
            <consortium name="The MGC Project Team"/>
        </authorList>
    </citation>
    <scope>NUCLEOTIDE SEQUENCE [LARGE SCALE MRNA]</scope>
    <source>
        <tissue>Lung</tissue>
    </source>
</reference>
<reference key="2">
    <citation type="submission" date="2006-11" db="UniProtKB">
        <authorList>
            <person name="Lubec G."/>
            <person name="Afjehi-Sadat L."/>
        </authorList>
    </citation>
    <scope>PROTEIN SEQUENCE OF 323-336</scope>
    <scope>IDENTIFICATION BY MASS SPECTROMETRY</scope>
    <source>
        <strain>Sprague-Dawley</strain>
        <tissue>Spinal cord</tissue>
    </source>
</reference>
<reference key="3">
    <citation type="journal article" date="2006" name="Proc. Natl. Acad. Sci. U.S.A.">
        <title>Quantitative phosphoproteomics of vasopressin-sensitive renal cells: regulation of aquaporin-2 phosphorylation at two sites.</title>
        <authorList>
            <person name="Hoffert J.D."/>
            <person name="Pisitkun T."/>
            <person name="Wang G."/>
            <person name="Shen R.-F."/>
            <person name="Knepper M.A."/>
        </authorList>
    </citation>
    <scope>PHOSPHORYLATION [LARGE SCALE ANALYSIS] AT SER-338</scope>
    <scope>IDENTIFICATION BY MASS SPECTROMETRY [LARGE SCALE ANALYSIS]</scope>
</reference>
<reference key="4">
    <citation type="journal article" date="2012" name="Nat. Commun.">
        <title>Quantitative maps of protein phosphorylation sites across 14 different rat organs and tissues.</title>
        <authorList>
            <person name="Lundby A."/>
            <person name="Secher A."/>
            <person name="Lage K."/>
            <person name="Nordsborg N.B."/>
            <person name="Dmytriyev A."/>
            <person name="Lundby C."/>
            <person name="Olsen J.V."/>
        </authorList>
    </citation>
    <scope>PHOSPHORYLATION [LARGE SCALE ANALYSIS] AT SER-338</scope>
    <scope>IDENTIFICATION BY MASS SPECTROMETRY [LARGE SCALE ANALYSIS]</scope>
</reference>
<gene>
    <name type="primary">Capg</name>
</gene>
<feature type="chain" id="PRO_0000271392" description="Macrophage-capping protein">
    <location>
        <begin position="1"/>
        <end position="349"/>
    </location>
</feature>
<feature type="repeat" description="Gelsolin-like 1">
    <location>
        <begin position="28"/>
        <end position="107"/>
    </location>
</feature>
<feature type="repeat" description="Gelsolin-like 2">
    <location>
        <begin position="147"/>
        <end position="222"/>
    </location>
</feature>
<feature type="repeat" description="Gelsolin-like 3">
    <location>
        <begin position="264"/>
        <end position="342"/>
    </location>
</feature>
<feature type="short sequence motif" description="Nuclear localization signal" evidence="4">
    <location>
        <begin position="138"/>
        <end position="147"/>
    </location>
</feature>
<feature type="modified residue" description="N-acetylmethionine" evidence="3">
    <location>
        <position position="1"/>
    </location>
</feature>
<feature type="modified residue" description="Phosphoserine" evidence="6 7">
    <location>
        <position position="338"/>
    </location>
</feature>
<proteinExistence type="evidence at protein level"/>
<accession>Q6AYC4</accession>
<sequence>MYTPIPQSGSPFPASVQDPGLHIWRVEKLKPVPIARENHGIFFSGDSYLVLHNGPEEASHLHLWIGQQSSRDEQGACAVLAVHLNTLLGERPVQHREVQGNESDLFMSYFPQGLKYREGGVESAFHKTTSGTTPAAIRKLYQVKGKKNIRATERALSWDSFNTGDCFILDLGQNIFAWCGGKSNILERNKARDLALAIRDSERQGKAQVEIITDGEEPAEMIQVLGPKPALKEGNPEEDITADQTNAQAAALYKVSDATGQMNLTKVADSSPFASELLIPDDCFVLDNGLCGKIYIWKGRKANEKERQAALQVADGFISRMRYSPNTQVEILPQGRESPIFKQFFKDWK</sequence>